<comment type="function">
    <text evidence="1">Joins adenosylcobinamide-GDP and alpha-ribazole to generate adenosylcobalamin (Ado-cobalamin). Also synthesizes adenosylcobalamin 5'-phosphate from adenosylcobinamide-GDP and alpha-ribazole 5'-phosphate.</text>
</comment>
<comment type="catalytic activity">
    <reaction evidence="1">
        <text>alpha-ribazole + adenosylcob(III)inamide-GDP = adenosylcob(III)alamin + GMP + H(+)</text>
        <dbReference type="Rhea" id="RHEA:16049"/>
        <dbReference type="ChEBI" id="CHEBI:10329"/>
        <dbReference type="ChEBI" id="CHEBI:15378"/>
        <dbReference type="ChEBI" id="CHEBI:18408"/>
        <dbReference type="ChEBI" id="CHEBI:58115"/>
        <dbReference type="ChEBI" id="CHEBI:60487"/>
        <dbReference type="EC" id="2.7.8.26"/>
    </reaction>
</comment>
<comment type="catalytic activity">
    <reaction evidence="1">
        <text>alpha-ribazole 5'-phosphate + adenosylcob(III)inamide-GDP = adenosylcob(III)alamin 5'-phosphate + GMP + H(+)</text>
        <dbReference type="Rhea" id="RHEA:23560"/>
        <dbReference type="ChEBI" id="CHEBI:15378"/>
        <dbReference type="ChEBI" id="CHEBI:57918"/>
        <dbReference type="ChEBI" id="CHEBI:58115"/>
        <dbReference type="ChEBI" id="CHEBI:60487"/>
        <dbReference type="ChEBI" id="CHEBI:60493"/>
        <dbReference type="EC" id="2.7.8.26"/>
    </reaction>
</comment>
<comment type="cofactor">
    <cofactor evidence="1">
        <name>Mg(2+)</name>
        <dbReference type="ChEBI" id="CHEBI:18420"/>
    </cofactor>
</comment>
<comment type="pathway">
    <text evidence="1">Cofactor biosynthesis; adenosylcobalamin biosynthesis; adenosylcobalamin from cob(II)yrinate a,c-diamide: step 7/7.</text>
</comment>
<comment type="subcellular location">
    <subcellularLocation>
        <location evidence="1">Cell inner membrane</location>
        <topology evidence="1">Multi-pass membrane protein</topology>
    </subcellularLocation>
</comment>
<comment type="similarity">
    <text evidence="1">Belongs to the CobS family.</text>
</comment>
<proteinExistence type="inferred from homology"/>
<feature type="chain" id="PRO_1000045794" description="Adenosylcobinamide-GDP ribazoletransferase">
    <location>
        <begin position="1"/>
        <end position="245"/>
    </location>
</feature>
<feature type="transmembrane region" description="Helical" evidence="1">
    <location>
        <begin position="31"/>
        <end position="51"/>
    </location>
</feature>
<feature type="transmembrane region" description="Helical" evidence="1">
    <location>
        <begin position="57"/>
        <end position="77"/>
    </location>
</feature>
<feature type="transmembrane region" description="Helical" evidence="1">
    <location>
        <begin position="109"/>
        <end position="129"/>
    </location>
</feature>
<feature type="transmembrane region" description="Helical" evidence="1">
    <location>
        <begin position="134"/>
        <end position="154"/>
    </location>
</feature>
<feature type="transmembrane region" description="Helical" evidence="1">
    <location>
        <begin position="176"/>
        <end position="196"/>
    </location>
</feature>
<gene>
    <name evidence="1" type="primary">cobS</name>
    <name type="ordered locus">PST_1301</name>
</gene>
<protein>
    <recommendedName>
        <fullName evidence="1">Adenosylcobinamide-GDP ribazoletransferase</fullName>
        <ecNumber evidence="1">2.7.8.26</ecNumber>
    </recommendedName>
    <alternativeName>
        <fullName evidence="1">Cobalamin synthase</fullName>
    </alternativeName>
    <alternativeName>
        <fullName evidence="1">Cobalamin-5'-phosphate synthase</fullName>
    </alternativeName>
</protein>
<accession>A4VJ44</accession>
<name>COBS_STUS1</name>
<reference key="1">
    <citation type="journal article" date="2008" name="Proc. Natl. Acad. Sci. U.S.A.">
        <title>Nitrogen fixation island and rhizosphere competence traits in the genome of root-associated Pseudomonas stutzeri A1501.</title>
        <authorList>
            <person name="Yan Y."/>
            <person name="Yang J."/>
            <person name="Dou Y."/>
            <person name="Chen M."/>
            <person name="Ping S."/>
            <person name="Peng J."/>
            <person name="Lu W."/>
            <person name="Zhang W."/>
            <person name="Yao Z."/>
            <person name="Li H."/>
            <person name="Liu W."/>
            <person name="He S."/>
            <person name="Geng L."/>
            <person name="Zhang X."/>
            <person name="Yang F."/>
            <person name="Yu H."/>
            <person name="Zhan Y."/>
            <person name="Li D."/>
            <person name="Lin Z."/>
            <person name="Wang Y."/>
            <person name="Elmerich C."/>
            <person name="Lin M."/>
            <person name="Jin Q."/>
        </authorList>
    </citation>
    <scope>NUCLEOTIDE SEQUENCE [LARGE SCALE GENOMIC DNA]</scope>
    <source>
        <strain>A1501</strain>
    </source>
</reference>
<evidence type="ECO:0000255" key="1">
    <source>
        <dbReference type="HAMAP-Rule" id="MF_00719"/>
    </source>
</evidence>
<sequence>MLPLLIALQFLTSLPIRLPAMPTPRQQGRSLLHYPAVGLFLGALLWLAALLLEGASPLLQAALLLALWVALTGALHLDGLADSADAWLGGFGDPARTLEIMKDPRSGPVAVVVLVIMLLLKFSALLVVLQAQQPAALVLAPLLGRAALLALFLCTPYVRPNGLGQALAANLPRSRALMVLALVVIGCLLLGATGLLALTLAGVTFLLARRAMLRRLGGTTGDTAGALLELVECAVLVGLALQVGR</sequence>
<organism>
    <name type="scientific">Stutzerimonas stutzeri (strain A1501)</name>
    <name type="common">Pseudomonas stutzeri</name>
    <dbReference type="NCBI Taxonomy" id="379731"/>
    <lineage>
        <taxon>Bacteria</taxon>
        <taxon>Pseudomonadati</taxon>
        <taxon>Pseudomonadota</taxon>
        <taxon>Gammaproteobacteria</taxon>
        <taxon>Pseudomonadales</taxon>
        <taxon>Pseudomonadaceae</taxon>
        <taxon>Stutzerimonas</taxon>
    </lineage>
</organism>
<dbReference type="EC" id="2.7.8.26" evidence="1"/>
<dbReference type="EMBL" id="CP000304">
    <property type="protein sequence ID" value="ABP78995.1"/>
    <property type="molecule type" value="Genomic_DNA"/>
</dbReference>
<dbReference type="RefSeq" id="WP_011912479.1">
    <property type="nucleotide sequence ID" value="NC_009434.1"/>
</dbReference>
<dbReference type="KEGG" id="psa:PST_1301"/>
<dbReference type="eggNOG" id="COG0368">
    <property type="taxonomic scope" value="Bacteria"/>
</dbReference>
<dbReference type="HOGENOM" id="CLU_057426_3_1_6"/>
<dbReference type="UniPathway" id="UPA00148">
    <property type="reaction ID" value="UER00238"/>
</dbReference>
<dbReference type="Proteomes" id="UP000000233">
    <property type="component" value="Chromosome"/>
</dbReference>
<dbReference type="GO" id="GO:0005886">
    <property type="term" value="C:plasma membrane"/>
    <property type="evidence" value="ECO:0007669"/>
    <property type="project" value="UniProtKB-SubCell"/>
</dbReference>
<dbReference type="GO" id="GO:0051073">
    <property type="term" value="F:adenosylcobinamide-GDP ribazoletransferase activity"/>
    <property type="evidence" value="ECO:0007669"/>
    <property type="project" value="UniProtKB-UniRule"/>
</dbReference>
<dbReference type="GO" id="GO:0008818">
    <property type="term" value="F:cobalamin 5'-phosphate synthase activity"/>
    <property type="evidence" value="ECO:0007669"/>
    <property type="project" value="UniProtKB-UniRule"/>
</dbReference>
<dbReference type="GO" id="GO:0009236">
    <property type="term" value="P:cobalamin biosynthetic process"/>
    <property type="evidence" value="ECO:0007669"/>
    <property type="project" value="UniProtKB-UniRule"/>
</dbReference>
<dbReference type="HAMAP" id="MF_00719">
    <property type="entry name" value="CobS"/>
    <property type="match status" value="1"/>
</dbReference>
<dbReference type="InterPro" id="IPR003805">
    <property type="entry name" value="CobS"/>
</dbReference>
<dbReference type="NCBIfam" id="TIGR00317">
    <property type="entry name" value="cobS"/>
    <property type="match status" value="1"/>
</dbReference>
<dbReference type="NCBIfam" id="NF001278">
    <property type="entry name" value="PRK00235.1-5"/>
    <property type="match status" value="1"/>
</dbReference>
<dbReference type="PANTHER" id="PTHR34148">
    <property type="entry name" value="ADENOSYLCOBINAMIDE-GDP RIBAZOLETRANSFERASE"/>
    <property type="match status" value="1"/>
</dbReference>
<dbReference type="PANTHER" id="PTHR34148:SF1">
    <property type="entry name" value="ADENOSYLCOBINAMIDE-GDP RIBAZOLETRANSFERASE"/>
    <property type="match status" value="1"/>
</dbReference>
<dbReference type="Pfam" id="PF02654">
    <property type="entry name" value="CobS"/>
    <property type="match status" value="1"/>
</dbReference>
<keyword id="KW-0997">Cell inner membrane</keyword>
<keyword id="KW-1003">Cell membrane</keyword>
<keyword id="KW-0169">Cobalamin biosynthesis</keyword>
<keyword id="KW-0460">Magnesium</keyword>
<keyword id="KW-0472">Membrane</keyword>
<keyword id="KW-1185">Reference proteome</keyword>
<keyword id="KW-0808">Transferase</keyword>
<keyword id="KW-0812">Transmembrane</keyword>
<keyword id="KW-1133">Transmembrane helix</keyword>